<accession>A4IIA2</accession>
<comment type="function">
    <text evidence="1">IGF-binding proteins prolong the half-life of the IGFs and have been shown to either inhibit or stimulate the growth promoting effects of the IGFs on cell culture. They alter the interaction of IGFs with their cell surface receptors (By similarity).</text>
</comment>
<comment type="subunit">
    <text evidence="3">Interacts with igf1 and igf2.</text>
</comment>
<comment type="subcellular location">
    <subcellularLocation>
        <location evidence="8">Secreted</location>
    </subcellularLocation>
</comment>
<proteinExistence type="evidence at transcript level"/>
<dbReference type="EMBL" id="BC135928">
    <property type="protein sequence ID" value="AAI35929.1"/>
    <property type="molecule type" value="mRNA"/>
</dbReference>
<dbReference type="RefSeq" id="NP_001093707.1">
    <property type="nucleotide sequence ID" value="NM_001100237.1"/>
</dbReference>
<dbReference type="SMR" id="A4IIA2"/>
<dbReference type="FunCoup" id="A4IIA2">
    <property type="interactions" value="282"/>
</dbReference>
<dbReference type="STRING" id="8364.ENSXETP00000020691"/>
<dbReference type="PaxDb" id="8364-ENSXETP00000042987"/>
<dbReference type="DNASU" id="100101720"/>
<dbReference type="GeneID" id="100101720"/>
<dbReference type="KEGG" id="xtr:100101720"/>
<dbReference type="AGR" id="Xenbase:XB-GENE-487299"/>
<dbReference type="CTD" id="3485"/>
<dbReference type="Xenbase" id="XB-GENE-487299">
    <property type="gene designation" value="igfbp2"/>
</dbReference>
<dbReference type="eggNOG" id="ENOG502QRWQ">
    <property type="taxonomic scope" value="Eukaryota"/>
</dbReference>
<dbReference type="InParanoid" id="A4IIA2"/>
<dbReference type="OMA" id="NLMPITM"/>
<dbReference type="OrthoDB" id="9984807at2759"/>
<dbReference type="Reactome" id="R-XTR-381426">
    <property type="pathway name" value="Regulation of Insulin-like Growth Factor (IGF) transport and uptake by Insulin-like Growth Factor Binding Proteins (IGFBPs)"/>
</dbReference>
<dbReference type="Proteomes" id="UP000008143">
    <property type="component" value="Chromosome 9"/>
</dbReference>
<dbReference type="Bgee" id="ENSXETG00000033133">
    <property type="expression patterns" value="Expressed in 2-cell stage embryo and 12 other cell types or tissues"/>
</dbReference>
<dbReference type="GO" id="GO:0005576">
    <property type="term" value="C:extracellular region"/>
    <property type="evidence" value="ECO:0000250"/>
    <property type="project" value="UniProtKB"/>
</dbReference>
<dbReference type="GO" id="GO:0031994">
    <property type="term" value="F:insulin-like growth factor I binding"/>
    <property type="evidence" value="ECO:0000250"/>
    <property type="project" value="UniProtKB"/>
</dbReference>
<dbReference type="GO" id="GO:0031995">
    <property type="term" value="F:insulin-like growth factor II binding"/>
    <property type="evidence" value="ECO:0000250"/>
    <property type="project" value="UniProtKB"/>
</dbReference>
<dbReference type="GO" id="GO:0043567">
    <property type="term" value="P:regulation of insulin-like growth factor receptor signaling pathway"/>
    <property type="evidence" value="ECO:0000250"/>
    <property type="project" value="UniProtKB"/>
</dbReference>
<dbReference type="CDD" id="cd00191">
    <property type="entry name" value="TY"/>
    <property type="match status" value="1"/>
</dbReference>
<dbReference type="FunFam" id="4.10.40.20:FF:000012">
    <property type="entry name" value="Insulin like growth factor binding protein 2"/>
    <property type="match status" value="1"/>
</dbReference>
<dbReference type="FunFam" id="4.10.800.10:FF:000002">
    <property type="entry name" value="Insulin-like growth factor-binding protein 2"/>
    <property type="match status" value="1"/>
</dbReference>
<dbReference type="Gene3D" id="4.10.40.20">
    <property type="match status" value="1"/>
</dbReference>
<dbReference type="Gene3D" id="4.10.800.10">
    <property type="entry name" value="Thyroglobulin type-1"/>
    <property type="match status" value="1"/>
</dbReference>
<dbReference type="InterPro" id="IPR009030">
    <property type="entry name" value="Growth_fac_rcpt_cys_sf"/>
</dbReference>
<dbReference type="InterPro" id="IPR012210">
    <property type="entry name" value="IGFBP-2"/>
</dbReference>
<dbReference type="InterPro" id="IPR000867">
    <property type="entry name" value="IGFBP-like"/>
</dbReference>
<dbReference type="InterPro" id="IPR022321">
    <property type="entry name" value="IGFBP_1-6_chordata"/>
</dbReference>
<dbReference type="InterPro" id="IPR017891">
    <property type="entry name" value="Insulin_GF-bd_Cys-rich_CS"/>
</dbReference>
<dbReference type="InterPro" id="IPR000716">
    <property type="entry name" value="Thyroglobulin_1"/>
</dbReference>
<dbReference type="InterPro" id="IPR036857">
    <property type="entry name" value="Thyroglobulin_1_sf"/>
</dbReference>
<dbReference type="PANTHER" id="PTHR11551">
    <property type="entry name" value="INSULIN-LIKE GROWTH FACTOR BINDING PROTEIN"/>
    <property type="match status" value="1"/>
</dbReference>
<dbReference type="PANTHER" id="PTHR11551:SF5">
    <property type="entry name" value="INSULIN-LIKE GROWTH FACTOR-BINDING PROTEIN 2"/>
    <property type="match status" value="1"/>
</dbReference>
<dbReference type="Pfam" id="PF00219">
    <property type="entry name" value="IGFBP"/>
    <property type="match status" value="1"/>
</dbReference>
<dbReference type="Pfam" id="PF00086">
    <property type="entry name" value="Thyroglobulin_1"/>
    <property type="match status" value="1"/>
</dbReference>
<dbReference type="PRINTS" id="PR01976">
    <property type="entry name" value="IGFBPFAMILY"/>
</dbReference>
<dbReference type="PRINTS" id="PR01978">
    <property type="entry name" value="IGFBPFAMILY2"/>
</dbReference>
<dbReference type="SMART" id="SM00121">
    <property type="entry name" value="IB"/>
    <property type="match status" value="1"/>
</dbReference>
<dbReference type="SMART" id="SM00211">
    <property type="entry name" value="TY"/>
    <property type="match status" value="1"/>
</dbReference>
<dbReference type="SUPFAM" id="SSF57184">
    <property type="entry name" value="Growth factor receptor domain"/>
    <property type="match status" value="1"/>
</dbReference>
<dbReference type="SUPFAM" id="SSF57610">
    <property type="entry name" value="Thyroglobulin type-1 domain"/>
    <property type="match status" value="1"/>
</dbReference>
<dbReference type="PROSITE" id="PS00222">
    <property type="entry name" value="IGFBP_N_1"/>
    <property type="match status" value="1"/>
</dbReference>
<dbReference type="PROSITE" id="PS51323">
    <property type="entry name" value="IGFBP_N_2"/>
    <property type="match status" value="1"/>
</dbReference>
<dbReference type="PROSITE" id="PS00484">
    <property type="entry name" value="THYROGLOBULIN_1_1"/>
    <property type="match status" value="1"/>
</dbReference>
<dbReference type="PROSITE" id="PS51162">
    <property type="entry name" value="THYROGLOBULIN_1_2"/>
    <property type="match status" value="1"/>
</dbReference>
<keyword id="KW-0217">Developmental protein</keyword>
<keyword id="KW-1015">Disulfide bond</keyword>
<keyword id="KW-0340">Growth factor binding</keyword>
<keyword id="KW-0341">Growth regulation</keyword>
<keyword id="KW-1185">Reference proteome</keyword>
<keyword id="KW-0964">Secreted</keyword>
<keyword id="KW-0732">Signal</keyword>
<name>IBP2_XENTR</name>
<reference evidence="9" key="1">
    <citation type="submission" date="2007-03" db="EMBL/GenBank/DDBJ databases">
        <authorList>
            <consortium name="NIH - Xenopus Gene Collection (XGC) project"/>
        </authorList>
    </citation>
    <scope>NUCLEOTIDE SEQUENCE [LARGE SCALE MRNA]</scope>
    <source>
        <tissue evidence="9">Tadpole</tissue>
    </source>
</reference>
<feature type="signal peptide" evidence="4">
    <location>
        <begin position="1"/>
        <end position="21"/>
    </location>
</feature>
<feature type="chain" id="PRO_0000381737" description="Insulin-like growth factor-binding protein 2" evidence="4">
    <location>
        <begin position="22"/>
        <end position="284"/>
    </location>
</feature>
<feature type="domain" description="IGFBP N-terminal" evidence="6">
    <location>
        <begin position="23"/>
        <end position="106"/>
    </location>
</feature>
<feature type="domain" description="Thyroglobulin type-1" evidence="5">
    <location>
        <begin position="184"/>
        <end position="266"/>
    </location>
</feature>
<feature type="region of interest" description="Disordered" evidence="7">
    <location>
        <begin position="108"/>
        <end position="184"/>
    </location>
</feature>
<feature type="short sequence motif" description="Cell attachment site" evidence="4">
    <location>
        <begin position="261"/>
        <end position="263"/>
    </location>
</feature>
<feature type="compositionally biased region" description="Basic and acidic residues" evidence="7">
    <location>
        <begin position="117"/>
        <end position="127"/>
    </location>
</feature>
<feature type="compositionally biased region" description="Low complexity" evidence="7">
    <location>
        <begin position="136"/>
        <end position="145"/>
    </location>
</feature>
<feature type="compositionally biased region" description="Basic and acidic residues" evidence="7">
    <location>
        <begin position="152"/>
        <end position="180"/>
    </location>
</feature>
<feature type="disulfide bond" evidence="6">
    <location>
        <begin position="27"/>
        <end position="56"/>
    </location>
</feature>
<feature type="disulfide bond" evidence="6">
    <location>
        <begin position="30"/>
        <end position="58"/>
    </location>
</feature>
<feature type="disulfide bond" evidence="6">
    <location>
        <begin position="38"/>
        <end position="59"/>
    </location>
</feature>
<feature type="disulfide bond" evidence="6">
    <location>
        <begin position="47"/>
        <end position="62"/>
    </location>
</feature>
<feature type="disulfide bond" evidence="6">
    <location>
        <begin position="70"/>
        <end position="83"/>
    </location>
</feature>
<feature type="disulfide bond" evidence="6">
    <location>
        <begin position="77"/>
        <end position="103"/>
    </location>
</feature>
<feature type="disulfide bond" evidence="2 5">
    <location>
        <begin position="187"/>
        <end position="221"/>
    </location>
</feature>
<feature type="disulfide bond" evidence="2 5">
    <location>
        <begin position="232"/>
        <end position="243"/>
    </location>
</feature>
<feature type="disulfide bond" evidence="2 5">
    <location>
        <begin position="245"/>
        <end position="266"/>
    </location>
</feature>
<gene>
    <name evidence="9" type="primary">igfbp2</name>
</gene>
<protein>
    <recommendedName>
        <fullName evidence="2">Insulin-like growth factor-binding protein 2</fullName>
        <shortName evidence="2">IGF-binding protein 2</shortName>
        <shortName evidence="2">IGFBP-2</shortName>
    </recommendedName>
</protein>
<evidence type="ECO:0000250" key="1"/>
<evidence type="ECO:0000250" key="2">
    <source>
        <dbReference type="UniProtKB" id="P18065"/>
    </source>
</evidence>
<evidence type="ECO:0000250" key="3">
    <source>
        <dbReference type="UniProtKB" id="Q9PTH3"/>
    </source>
</evidence>
<evidence type="ECO:0000255" key="4"/>
<evidence type="ECO:0000255" key="5">
    <source>
        <dbReference type="PROSITE-ProRule" id="PRU00500"/>
    </source>
</evidence>
<evidence type="ECO:0000255" key="6">
    <source>
        <dbReference type="PROSITE-ProRule" id="PRU00653"/>
    </source>
</evidence>
<evidence type="ECO:0000256" key="7">
    <source>
        <dbReference type="SAM" id="MobiDB-lite"/>
    </source>
</evidence>
<evidence type="ECO:0000305" key="8"/>
<evidence type="ECO:0000312" key="9">
    <source>
        <dbReference type="EMBL" id="AAI35929.1"/>
    </source>
</evidence>
<sequence length="284" mass="30891">MGLSRYLLGLLLGVLCTPAPAEVLFRCPPCSPERLATCPGSAPRPPCAELVRAPGCGCCPVCARLEGESCGVYTARCAGGLRCYPHPGSELPLQALVLGLGTCGKRRDTEYGSSQERGTELPEERSDNMLVDNKLEAGPAVAGEAAPRKPSKKEMKEIAVTRERANEQQRSKSNKSEDKKRPARSLCQLQLDQVLERISGMHLPDDRGPLEHLYALHIPNCDKNGFFNLKQCKMSVNGQRGECWCVNPITGKALPGSPTIRGDPECHLYYTSPEEGRAHTQRAP</sequence>
<organism>
    <name type="scientific">Xenopus tropicalis</name>
    <name type="common">Western clawed frog</name>
    <name type="synonym">Silurana tropicalis</name>
    <dbReference type="NCBI Taxonomy" id="8364"/>
    <lineage>
        <taxon>Eukaryota</taxon>
        <taxon>Metazoa</taxon>
        <taxon>Chordata</taxon>
        <taxon>Craniata</taxon>
        <taxon>Vertebrata</taxon>
        <taxon>Euteleostomi</taxon>
        <taxon>Amphibia</taxon>
        <taxon>Batrachia</taxon>
        <taxon>Anura</taxon>
        <taxon>Pipoidea</taxon>
        <taxon>Pipidae</taxon>
        <taxon>Xenopodinae</taxon>
        <taxon>Xenopus</taxon>
        <taxon>Silurana</taxon>
    </lineage>
</organism>